<reference key="1">
    <citation type="book" date="1977" name="Plant biochemistry II">
        <editorList>
            <person name="Northcote D.H."/>
        </editorList>
        <authorList>
            <person name="Boulter D."/>
            <person name="Haslett B.G."/>
            <person name="Peacock D."/>
            <person name="Ramshaw J.A.M."/>
            <person name="Scawen M.D."/>
        </authorList>
    </citation>
    <scope>PROTEIN SEQUENCE</scope>
    <scope>SUBCELLULAR LOCATION</scope>
</reference>
<sequence>LDVLLGSDDGELAFVPNNFSVPSGEKITFKNNAGFPHNVVFDEDEIPSGVDASKISMDEADLLNAPGETYAVTLTEKGSYSFYCSPHQGAGMVGKVTVN</sequence>
<evidence type="ECO:0000250" key="1">
    <source>
        <dbReference type="UniProtKB" id="P18068"/>
    </source>
</evidence>
<evidence type="ECO:0000269" key="2">
    <source ref="1"/>
</evidence>
<evidence type="ECO:0000305" key="3"/>
<proteinExistence type="evidence at protein level"/>
<gene>
    <name type="primary">PETE</name>
</gene>
<comment type="function">
    <text evidence="1">Participates in electron transfer between P700 and the cytochrome b6-f complex in photosystem I.</text>
</comment>
<comment type="cofactor">
    <cofactor evidence="1">
        <name>Cu(2+)</name>
        <dbReference type="ChEBI" id="CHEBI:29036"/>
    </cofactor>
</comment>
<comment type="subcellular location">
    <subcellularLocation>
        <location evidence="2">Plastid</location>
        <location evidence="2">Chloroplast thylakoid membrane</location>
        <topology evidence="1">Peripheral membrane protein</topology>
        <orientation evidence="1">Lumenal side</orientation>
    </subcellularLocation>
    <text>Loosely bound to the inner thylakoid membrane surface in chloroplasts (By similarity).</text>
</comment>
<comment type="similarity">
    <text evidence="3">Belongs to the plastocyanin family.</text>
</comment>
<name>PLAS_MERPE</name>
<feature type="chain" id="PRO_0000085569" description="Plastocyanin">
    <location>
        <begin position="1"/>
        <end position="99"/>
    </location>
</feature>
<feature type="domain" description="Plastocyanin-like">
    <location>
        <begin position="1"/>
        <end position="99"/>
    </location>
</feature>
<feature type="binding site" evidence="1">
    <location>
        <position position="37"/>
    </location>
    <ligand>
        <name>Cu cation</name>
        <dbReference type="ChEBI" id="CHEBI:23378"/>
    </ligand>
</feature>
<feature type="binding site" evidence="1">
    <location>
        <position position="84"/>
    </location>
    <ligand>
        <name>Cu cation</name>
        <dbReference type="ChEBI" id="CHEBI:23378"/>
    </ligand>
</feature>
<feature type="binding site" evidence="1">
    <location>
        <position position="87"/>
    </location>
    <ligand>
        <name>Cu cation</name>
        <dbReference type="ChEBI" id="CHEBI:23378"/>
    </ligand>
</feature>
<feature type="binding site" evidence="1">
    <location>
        <position position="92"/>
    </location>
    <ligand>
        <name>Cu cation</name>
        <dbReference type="ChEBI" id="CHEBI:23378"/>
    </ligand>
</feature>
<keyword id="KW-0150">Chloroplast</keyword>
<keyword id="KW-0186">Copper</keyword>
<keyword id="KW-0903">Direct protein sequencing</keyword>
<keyword id="KW-0249">Electron transport</keyword>
<keyword id="KW-0472">Membrane</keyword>
<keyword id="KW-0479">Metal-binding</keyword>
<keyword id="KW-0934">Plastid</keyword>
<keyword id="KW-0793">Thylakoid</keyword>
<keyword id="KW-0813">Transport</keyword>
<accession>P00295</accession>
<protein>
    <recommendedName>
        <fullName>Plastocyanin</fullName>
    </recommendedName>
</protein>
<organism>
    <name type="scientific">Mercurialis perennis</name>
    <name type="common">Dog's mercury</name>
    <dbReference type="NCBI Taxonomy" id="3985"/>
    <lineage>
        <taxon>Eukaryota</taxon>
        <taxon>Viridiplantae</taxon>
        <taxon>Streptophyta</taxon>
        <taxon>Embryophyta</taxon>
        <taxon>Tracheophyta</taxon>
        <taxon>Spermatophyta</taxon>
        <taxon>Magnoliopsida</taxon>
        <taxon>eudicotyledons</taxon>
        <taxon>Gunneridae</taxon>
        <taxon>Pentapetalae</taxon>
        <taxon>rosids</taxon>
        <taxon>fabids</taxon>
        <taxon>Malpighiales</taxon>
        <taxon>Euphorbiaceae</taxon>
        <taxon>Acalyphoideae</taxon>
        <taxon>Acalypheae</taxon>
        <taxon>Mercurialis</taxon>
    </lineage>
</organism>
<dbReference type="PIR" id="A00305">
    <property type="entry name" value="CUDM"/>
</dbReference>
<dbReference type="SMR" id="P00295"/>
<dbReference type="GO" id="GO:0009543">
    <property type="term" value="C:chloroplast thylakoid lumen"/>
    <property type="evidence" value="ECO:0007669"/>
    <property type="project" value="TreeGrafter"/>
</dbReference>
<dbReference type="GO" id="GO:0009535">
    <property type="term" value="C:chloroplast thylakoid membrane"/>
    <property type="evidence" value="ECO:0007669"/>
    <property type="project" value="UniProtKB-SubCell"/>
</dbReference>
<dbReference type="GO" id="GO:0005507">
    <property type="term" value="F:copper ion binding"/>
    <property type="evidence" value="ECO:0007669"/>
    <property type="project" value="InterPro"/>
</dbReference>
<dbReference type="GO" id="GO:0046028">
    <property type="term" value="F:electron transporter, transferring electrons from cytochrome b6/f complex of photosystem II activity"/>
    <property type="evidence" value="ECO:0007669"/>
    <property type="project" value="TreeGrafter"/>
</dbReference>
<dbReference type="CDD" id="cd04219">
    <property type="entry name" value="Plastocyanin"/>
    <property type="match status" value="1"/>
</dbReference>
<dbReference type="Gene3D" id="2.60.40.420">
    <property type="entry name" value="Cupredoxins - blue copper proteins"/>
    <property type="match status" value="1"/>
</dbReference>
<dbReference type="InterPro" id="IPR000923">
    <property type="entry name" value="BlueCu_1"/>
</dbReference>
<dbReference type="InterPro" id="IPR028871">
    <property type="entry name" value="BlueCu_1_BS"/>
</dbReference>
<dbReference type="InterPro" id="IPR001235">
    <property type="entry name" value="Copper_blue_Plastocyanin"/>
</dbReference>
<dbReference type="InterPro" id="IPR008972">
    <property type="entry name" value="Cupredoxin"/>
</dbReference>
<dbReference type="InterPro" id="IPR002387">
    <property type="entry name" value="Plastocyanin"/>
</dbReference>
<dbReference type="NCBIfam" id="TIGR02656">
    <property type="entry name" value="cyanin_plasto"/>
    <property type="match status" value="1"/>
</dbReference>
<dbReference type="PANTHER" id="PTHR34192">
    <property type="entry name" value="PLASTOCYANIN MAJOR ISOFORM, CHLOROPLASTIC-RELATED"/>
    <property type="match status" value="1"/>
</dbReference>
<dbReference type="PANTHER" id="PTHR34192:SF10">
    <property type="entry name" value="PLASTOCYANIN MAJOR ISOFORM, CHLOROPLASTIC-RELATED"/>
    <property type="match status" value="1"/>
</dbReference>
<dbReference type="Pfam" id="PF00127">
    <property type="entry name" value="Copper-bind"/>
    <property type="match status" value="1"/>
</dbReference>
<dbReference type="PRINTS" id="PR00156">
    <property type="entry name" value="COPPERBLUE"/>
</dbReference>
<dbReference type="PRINTS" id="PR00157">
    <property type="entry name" value="PLASTOCYANIN"/>
</dbReference>
<dbReference type="SUPFAM" id="SSF49503">
    <property type="entry name" value="Cupredoxins"/>
    <property type="match status" value="1"/>
</dbReference>
<dbReference type="PROSITE" id="PS00196">
    <property type="entry name" value="COPPER_BLUE"/>
    <property type="match status" value="1"/>
</dbReference>